<organism>
    <name type="scientific">Trichormus variabilis (strain ATCC 29413 / PCC 7937)</name>
    <name type="common">Anabaena variabilis</name>
    <dbReference type="NCBI Taxonomy" id="240292"/>
    <lineage>
        <taxon>Bacteria</taxon>
        <taxon>Bacillati</taxon>
        <taxon>Cyanobacteriota</taxon>
        <taxon>Cyanophyceae</taxon>
        <taxon>Nostocales</taxon>
        <taxon>Nostocaceae</taxon>
        <taxon>Trichormus</taxon>
    </lineage>
</organism>
<evidence type="ECO:0000250" key="1"/>
<evidence type="ECO:0000255" key="2">
    <source>
        <dbReference type="PROSITE-ProRule" id="PRU00241"/>
    </source>
</evidence>
<evidence type="ECO:0000305" key="3"/>
<protein>
    <recommendedName>
        <fullName>Rubredoxin</fullName>
        <shortName>Rd</shortName>
    </recommendedName>
</protein>
<feature type="chain" id="PRO_0000135052" description="Rubredoxin">
    <location>
        <begin position="1"/>
        <end position="111"/>
    </location>
</feature>
<feature type="domain" description="Rubredoxin-like" evidence="2">
    <location>
        <begin position="11"/>
        <end position="62"/>
    </location>
</feature>
<feature type="binding site" evidence="2">
    <location>
        <position position="16"/>
    </location>
    <ligand>
        <name>Fe cation</name>
        <dbReference type="ChEBI" id="CHEBI:24875"/>
    </ligand>
</feature>
<feature type="binding site" evidence="2">
    <location>
        <position position="19"/>
    </location>
    <ligand>
        <name>Fe cation</name>
        <dbReference type="ChEBI" id="CHEBI:24875"/>
    </ligand>
</feature>
<feature type="binding site" evidence="2">
    <location>
        <position position="49"/>
    </location>
    <ligand>
        <name>Fe cation</name>
        <dbReference type="ChEBI" id="CHEBI:24875"/>
    </ligand>
</feature>
<feature type="binding site" evidence="2">
    <location>
        <position position="52"/>
    </location>
    <ligand>
        <name>Fe cation</name>
        <dbReference type="ChEBI" id="CHEBI:24875"/>
    </ligand>
</feature>
<gene>
    <name type="primary">rub</name>
    <name type="synonym">hoxR</name>
    <name type="ordered locus">Ava_1857</name>
</gene>
<reference key="1">
    <citation type="submission" date="1998-10" db="EMBL/GenBank/DDBJ databases">
        <title>Isolation and characterisation of the ndhCKJ gene-cluster of Anabaena variabilis.</title>
        <authorList>
            <person name="Happe T."/>
            <person name="Schiefer W."/>
            <person name="Boehme H."/>
        </authorList>
    </citation>
    <scope>NUCLEOTIDE SEQUENCE [GENOMIC DNA]</scope>
</reference>
<reference key="2">
    <citation type="journal article" date="2014" name="Stand. Genomic Sci.">
        <title>Complete genome sequence of Anabaena variabilis ATCC 29413.</title>
        <authorList>
            <person name="Thiel T."/>
            <person name="Pratte B.S."/>
            <person name="Zhong J."/>
            <person name="Goodwin L."/>
            <person name="Copeland A."/>
            <person name="Lucas S."/>
            <person name="Han C."/>
            <person name="Pitluck S."/>
            <person name="Land M.L."/>
            <person name="Kyrpides N.C."/>
            <person name="Woyke T."/>
        </authorList>
    </citation>
    <scope>NUCLEOTIDE SEQUENCE [LARGE SCALE GENOMIC DNA]</scope>
    <source>
        <strain>ATCC 29413 / PCC 7937</strain>
    </source>
</reference>
<keyword id="KW-0249">Electron transport</keyword>
<keyword id="KW-0408">Iron</keyword>
<keyword id="KW-0479">Metal-binding</keyword>
<keyword id="KW-0813">Transport</keyword>
<name>RUBR_TRIV2</name>
<comment type="function">
    <text evidence="1">Rubredoxin is a small nonheme, iron protein lacking acid-labile sulfide. Its single Fe, chelated to 4 Cys, functions as an electron acceptor and may also stabilize the conformation of the molecule. Could be involved in hydrogenase-linked redox processes (By similarity).</text>
</comment>
<comment type="cofactor">
    <cofactor evidence="1">
        <name>Fe(3+)</name>
        <dbReference type="ChEBI" id="CHEBI:29034"/>
    </cofactor>
    <text evidence="1">Binds 1 Fe(3+) ion per subunit.</text>
</comment>
<comment type="similarity">
    <text evidence="3">Belongs to the rubredoxin family.</text>
</comment>
<proteinExistence type="inferred from homology"/>
<dbReference type="EMBL" id="AJ012181">
    <property type="protein sequence ID" value="CAB45645.1"/>
    <property type="molecule type" value="Genomic_DNA"/>
</dbReference>
<dbReference type="EMBL" id="CP000117">
    <property type="protein sequence ID" value="ABA21479.1"/>
    <property type="molecule type" value="Genomic_DNA"/>
</dbReference>
<dbReference type="SMR" id="Q9XBL8"/>
<dbReference type="STRING" id="240292.Ava_1857"/>
<dbReference type="KEGG" id="ava:Ava_1857"/>
<dbReference type="eggNOG" id="COG1773">
    <property type="taxonomic scope" value="Bacteria"/>
</dbReference>
<dbReference type="HOGENOM" id="CLU_083159_2_1_3"/>
<dbReference type="Proteomes" id="UP000002533">
    <property type="component" value="Chromosome"/>
</dbReference>
<dbReference type="GO" id="GO:0009055">
    <property type="term" value="F:electron transfer activity"/>
    <property type="evidence" value="ECO:0007669"/>
    <property type="project" value="TreeGrafter"/>
</dbReference>
<dbReference type="GO" id="GO:0005506">
    <property type="term" value="F:iron ion binding"/>
    <property type="evidence" value="ECO:0007669"/>
    <property type="project" value="InterPro"/>
</dbReference>
<dbReference type="GO" id="GO:0043448">
    <property type="term" value="P:alkane catabolic process"/>
    <property type="evidence" value="ECO:0007669"/>
    <property type="project" value="TreeGrafter"/>
</dbReference>
<dbReference type="CDD" id="cd00730">
    <property type="entry name" value="rubredoxin"/>
    <property type="match status" value="1"/>
</dbReference>
<dbReference type="Gene3D" id="2.20.28.10">
    <property type="match status" value="1"/>
</dbReference>
<dbReference type="InterPro" id="IPR024934">
    <property type="entry name" value="Rubredoxin-like_dom"/>
</dbReference>
<dbReference type="InterPro" id="IPR024935">
    <property type="entry name" value="Rubredoxin_dom"/>
</dbReference>
<dbReference type="InterPro" id="IPR050526">
    <property type="entry name" value="Rubredoxin_ET"/>
</dbReference>
<dbReference type="PANTHER" id="PTHR47627">
    <property type="entry name" value="RUBREDOXIN"/>
    <property type="match status" value="1"/>
</dbReference>
<dbReference type="PANTHER" id="PTHR47627:SF1">
    <property type="entry name" value="RUBREDOXIN-1-RELATED"/>
    <property type="match status" value="1"/>
</dbReference>
<dbReference type="Pfam" id="PF00301">
    <property type="entry name" value="Rubredoxin"/>
    <property type="match status" value="1"/>
</dbReference>
<dbReference type="PRINTS" id="PR00163">
    <property type="entry name" value="RUBREDOXIN"/>
</dbReference>
<dbReference type="SUPFAM" id="SSF57802">
    <property type="entry name" value="Rubredoxin-like"/>
    <property type="match status" value="1"/>
</dbReference>
<dbReference type="PROSITE" id="PS50903">
    <property type="entry name" value="RUBREDOXIN_LIKE"/>
    <property type="match status" value="1"/>
</dbReference>
<accession>Q9XBL8</accession>
<accession>Q3MC07</accession>
<sequence>MSEQAVENTVLDRFECRSCGYVYEPEKGDSKHDIAPETPFAELPINWRCPVCTAKKAAFSNIGPAGTASGFRENLGYGLGVNKLTPAQKNILIFGALALGFLFFISLYGLQ</sequence>